<comment type="function">
    <text evidence="1">Catalyzes the deamination of 5-methylthioadenosine and S-adenosyl-L-homocysteine into 5-methylthioinosine and S-inosyl-L-homocysteine, respectively. Is also able to deaminate adenosine.</text>
</comment>
<comment type="catalytic activity">
    <reaction evidence="1">
        <text>S-adenosyl-L-homocysteine + H2O + H(+) = S-inosyl-L-homocysteine + NH4(+)</text>
        <dbReference type="Rhea" id="RHEA:20716"/>
        <dbReference type="ChEBI" id="CHEBI:15377"/>
        <dbReference type="ChEBI" id="CHEBI:15378"/>
        <dbReference type="ChEBI" id="CHEBI:28938"/>
        <dbReference type="ChEBI" id="CHEBI:57856"/>
        <dbReference type="ChEBI" id="CHEBI:57985"/>
        <dbReference type="EC" id="3.5.4.28"/>
    </reaction>
</comment>
<comment type="catalytic activity">
    <reaction evidence="1">
        <text>S-methyl-5'-thioadenosine + H2O + H(+) = S-methyl-5'-thioinosine + NH4(+)</text>
        <dbReference type="Rhea" id="RHEA:25025"/>
        <dbReference type="ChEBI" id="CHEBI:15377"/>
        <dbReference type="ChEBI" id="CHEBI:15378"/>
        <dbReference type="ChEBI" id="CHEBI:17509"/>
        <dbReference type="ChEBI" id="CHEBI:28938"/>
        <dbReference type="ChEBI" id="CHEBI:48595"/>
        <dbReference type="EC" id="3.5.4.31"/>
    </reaction>
</comment>
<comment type="cofactor">
    <cofactor evidence="1">
        <name>Zn(2+)</name>
        <dbReference type="ChEBI" id="CHEBI:29105"/>
    </cofactor>
    <text evidence="1">Binds 1 zinc ion per subunit.</text>
</comment>
<comment type="similarity">
    <text evidence="1">Belongs to the metallo-dependent hydrolases superfamily. MTA/SAH deaminase family.</text>
</comment>
<comment type="sequence caution" evidence="2">
    <conflict type="erroneous initiation">
        <sequence resource="EMBL-CDS" id="AAU18572"/>
    </conflict>
</comment>
<name>MTAD_BACCZ</name>
<keyword id="KW-0378">Hydrolase</keyword>
<keyword id="KW-0479">Metal-binding</keyword>
<keyword id="KW-0862">Zinc</keyword>
<accession>Q63CU1</accession>
<gene>
    <name evidence="1" type="primary">mtaD</name>
    <name type="ordered locus">BCE33L1681</name>
</gene>
<dbReference type="EC" id="3.5.4.28" evidence="1"/>
<dbReference type="EC" id="3.5.4.31" evidence="1"/>
<dbReference type="EMBL" id="CP000001">
    <property type="protein sequence ID" value="AAU18572.1"/>
    <property type="status" value="ALT_INIT"/>
    <property type="molecule type" value="Genomic_DNA"/>
</dbReference>
<dbReference type="SMR" id="Q63CU1"/>
<dbReference type="KEGG" id="bcz:BCE33L1681"/>
<dbReference type="Proteomes" id="UP000002612">
    <property type="component" value="Chromosome"/>
</dbReference>
<dbReference type="GO" id="GO:0090614">
    <property type="term" value="F:5'-methylthioadenosine deaminase activity"/>
    <property type="evidence" value="ECO:0007669"/>
    <property type="project" value="UniProtKB-UniRule"/>
</dbReference>
<dbReference type="GO" id="GO:0046872">
    <property type="term" value="F:metal ion binding"/>
    <property type="evidence" value="ECO:0007669"/>
    <property type="project" value="UniProtKB-KW"/>
</dbReference>
<dbReference type="GO" id="GO:0050270">
    <property type="term" value="F:S-adenosylhomocysteine deaminase activity"/>
    <property type="evidence" value="ECO:0007669"/>
    <property type="project" value="UniProtKB-UniRule"/>
</dbReference>
<dbReference type="CDD" id="cd01298">
    <property type="entry name" value="ATZ_TRZ_like"/>
    <property type="match status" value="1"/>
</dbReference>
<dbReference type="FunFam" id="3.20.20.140:FF:000014">
    <property type="entry name" value="5-methylthioadenosine/S-adenosylhomocysteine deaminase"/>
    <property type="match status" value="1"/>
</dbReference>
<dbReference type="Gene3D" id="3.20.20.140">
    <property type="entry name" value="Metal-dependent hydrolases"/>
    <property type="match status" value="1"/>
</dbReference>
<dbReference type="Gene3D" id="2.30.40.10">
    <property type="entry name" value="Urease, subunit C, domain 1"/>
    <property type="match status" value="1"/>
</dbReference>
<dbReference type="HAMAP" id="MF_01281">
    <property type="entry name" value="MTA_SAH_deamin"/>
    <property type="match status" value="1"/>
</dbReference>
<dbReference type="InterPro" id="IPR006680">
    <property type="entry name" value="Amidohydro-rel"/>
</dbReference>
<dbReference type="InterPro" id="IPR023512">
    <property type="entry name" value="Deaminase_MtaD/DadD"/>
</dbReference>
<dbReference type="InterPro" id="IPR011059">
    <property type="entry name" value="Metal-dep_hydrolase_composite"/>
</dbReference>
<dbReference type="InterPro" id="IPR032466">
    <property type="entry name" value="Metal_Hydrolase"/>
</dbReference>
<dbReference type="InterPro" id="IPR050287">
    <property type="entry name" value="MTA/SAH_deaminase"/>
</dbReference>
<dbReference type="NCBIfam" id="NF012037">
    <property type="entry name" value="PRK15493.1"/>
    <property type="match status" value="1"/>
</dbReference>
<dbReference type="PANTHER" id="PTHR43794:SF11">
    <property type="entry name" value="AMIDOHYDROLASE-RELATED DOMAIN-CONTAINING PROTEIN"/>
    <property type="match status" value="1"/>
</dbReference>
<dbReference type="PANTHER" id="PTHR43794">
    <property type="entry name" value="AMINOHYDROLASE SSNA-RELATED"/>
    <property type="match status" value="1"/>
</dbReference>
<dbReference type="Pfam" id="PF01979">
    <property type="entry name" value="Amidohydro_1"/>
    <property type="match status" value="1"/>
</dbReference>
<dbReference type="SUPFAM" id="SSF51338">
    <property type="entry name" value="Composite domain of metallo-dependent hydrolases"/>
    <property type="match status" value="1"/>
</dbReference>
<dbReference type="SUPFAM" id="SSF51556">
    <property type="entry name" value="Metallo-dependent hydrolases"/>
    <property type="match status" value="1"/>
</dbReference>
<protein>
    <recommendedName>
        <fullName evidence="1">5-methylthioadenosine/S-adenosylhomocysteine deaminase</fullName>
        <shortName evidence="1">MTA/SAH deaminase</shortName>
        <ecNumber evidence="1">3.5.4.28</ecNumber>
        <ecNumber evidence="1">3.5.4.31</ecNumber>
    </recommendedName>
</protein>
<reference key="1">
    <citation type="journal article" date="2006" name="J. Bacteriol.">
        <title>Pathogenomic sequence analysis of Bacillus cereus and Bacillus thuringiensis isolates closely related to Bacillus anthracis.</title>
        <authorList>
            <person name="Han C.S."/>
            <person name="Xie G."/>
            <person name="Challacombe J.F."/>
            <person name="Altherr M.R."/>
            <person name="Bhotika S.S."/>
            <person name="Bruce D."/>
            <person name="Campbell C.S."/>
            <person name="Campbell M.L."/>
            <person name="Chen J."/>
            <person name="Chertkov O."/>
            <person name="Cleland C."/>
            <person name="Dimitrijevic M."/>
            <person name="Doggett N.A."/>
            <person name="Fawcett J.J."/>
            <person name="Glavina T."/>
            <person name="Goodwin L.A."/>
            <person name="Hill K.K."/>
            <person name="Hitchcock P."/>
            <person name="Jackson P.J."/>
            <person name="Keim P."/>
            <person name="Kewalramani A.R."/>
            <person name="Longmire J."/>
            <person name="Lucas S."/>
            <person name="Malfatti S."/>
            <person name="McMurry K."/>
            <person name="Meincke L.J."/>
            <person name="Misra M."/>
            <person name="Moseman B.L."/>
            <person name="Mundt M."/>
            <person name="Munk A.C."/>
            <person name="Okinaka R.T."/>
            <person name="Parson-Quintana B."/>
            <person name="Reilly L.P."/>
            <person name="Richardson P."/>
            <person name="Robinson D.L."/>
            <person name="Rubin E."/>
            <person name="Saunders E."/>
            <person name="Tapia R."/>
            <person name="Tesmer J.G."/>
            <person name="Thayer N."/>
            <person name="Thompson L.S."/>
            <person name="Tice H."/>
            <person name="Ticknor L.O."/>
            <person name="Wills P.L."/>
            <person name="Brettin T.S."/>
            <person name="Gilna P."/>
        </authorList>
    </citation>
    <scope>NUCLEOTIDE SEQUENCE [LARGE SCALE GENOMIC DNA]</scope>
    <source>
        <strain>ZK / E33L</strain>
    </source>
</reference>
<organism>
    <name type="scientific">Bacillus cereus (strain ZK / E33L)</name>
    <dbReference type="NCBI Taxonomy" id="288681"/>
    <lineage>
        <taxon>Bacteria</taxon>
        <taxon>Bacillati</taxon>
        <taxon>Bacillota</taxon>
        <taxon>Bacilli</taxon>
        <taxon>Bacillales</taxon>
        <taxon>Bacillaceae</taxon>
        <taxon>Bacillus</taxon>
        <taxon>Bacillus cereus group</taxon>
    </lineage>
</organism>
<feature type="chain" id="PRO_0000312444" description="5-methylthioadenosine/S-adenosylhomocysteine deaminase">
    <location>
        <begin position="1"/>
        <end position="435"/>
    </location>
</feature>
<feature type="binding site" evidence="1">
    <location>
        <position position="65"/>
    </location>
    <ligand>
        <name>Zn(2+)</name>
        <dbReference type="ChEBI" id="CHEBI:29105"/>
    </ligand>
</feature>
<feature type="binding site" evidence="1">
    <location>
        <position position="67"/>
    </location>
    <ligand>
        <name>Zn(2+)</name>
        <dbReference type="ChEBI" id="CHEBI:29105"/>
    </ligand>
</feature>
<feature type="binding site" evidence="1">
    <location>
        <position position="94"/>
    </location>
    <ligand>
        <name>substrate</name>
    </ligand>
</feature>
<feature type="binding site" evidence="1">
    <location>
        <position position="150"/>
    </location>
    <ligand>
        <name>substrate</name>
    </ligand>
</feature>
<feature type="binding site" evidence="1">
    <location>
        <position position="189"/>
    </location>
    <ligand>
        <name>substrate</name>
    </ligand>
</feature>
<feature type="binding site" evidence="1">
    <location>
        <position position="216"/>
    </location>
    <ligand>
        <name>Zn(2+)</name>
        <dbReference type="ChEBI" id="CHEBI:29105"/>
    </ligand>
</feature>
<feature type="binding site" evidence="1">
    <location>
        <position position="219"/>
    </location>
    <ligand>
        <name>substrate</name>
    </ligand>
</feature>
<feature type="binding site" evidence="1">
    <location>
        <position position="304"/>
    </location>
    <ligand>
        <name>substrate</name>
    </ligand>
</feature>
<feature type="binding site" evidence="1">
    <location>
        <position position="304"/>
    </location>
    <ligand>
        <name>Zn(2+)</name>
        <dbReference type="ChEBI" id="CHEBI:29105"/>
    </ligand>
</feature>
<sequence length="435" mass="48140">MKTTYVNATIVTMNEQNEVIENGYIIVENDQIIDVKSGEFASDFEVDEVIDMKGKWVLPGLVNTHTHVVMSLLRGIGDDMLLQPWLETRIWPLESQFTPQIAVASTELGLLEMVKSGTTSFSDMFNPIGVDQDAIMETVSRSGMRAAVSRTLFSFGTKEDEKKAIEEAERYVKRYYNESGMLTTMVAPHSPYTCSTELLEECARIAVENRTMVHIHLSETEREVRDIEAQYGKRPVEYAASCGLFKRPTVIAHGVVLNDSERAFLAEHDVRVAHNPNSNLKLGSGIANVKAMLEAGIKVGIATDSVASNNNLDMFEEMRIATLLQKGIHQDATALPVETALTLATKGAAEVIGMKQTGSLEVGKCADFITIDPSNKPHLQPADEVLSHLVYAASGKDISDVIINGKRVVWNGECKTLDEERIIFEASRYKRGLQR</sequence>
<evidence type="ECO:0000255" key="1">
    <source>
        <dbReference type="HAMAP-Rule" id="MF_01281"/>
    </source>
</evidence>
<evidence type="ECO:0000305" key="2"/>
<proteinExistence type="inferred from homology"/>